<gene>
    <name evidence="1" type="primary">mdtA</name>
    <name type="ordered locus">EcHS_A2216</name>
</gene>
<name>MDTA_ECOHS</name>
<sequence>MKGSYKSRWVIVIVVVIAAIAAFWFWQGRNDSRSAAPGATKQAQQSPAGGRRGMRSGPLAPVQAATAVEQAVPRYLTGLGTITAANTVTVRSRVDGQLIALHFQEGQQVKAGDLLAEIDPSQFKVALAQAQGQLAKDKATLANARRDLARYQQLAKTNLVSRQELDAQQALVSETEGTIKADEASVASAQLQLDWSRITAPVDGRVGLKQVDVGNQISSGDTTGIVVITQTHPIDLVFTLPESDIATVVQAQKAGKPLVVEAWDRTNSKKLSEGTLLSLDNQIDATTGTIKVKARFNNQDDALFPNQFVNARMLVDTEQNAVVIPTAALQMGNEGHFVWVLNSENKVSKHLVTPGIQDSQKVVIRAGISAGDRVVTDGIDRLTEGAKVEVVEAQSATTPEEKATSREYAKKGARS</sequence>
<organism>
    <name type="scientific">Escherichia coli O9:H4 (strain HS)</name>
    <dbReference type="NCBI Taxonomy" id="331112"/>
    <lineage>
        <taxon>Bacteria</taxon>
        <taxon>Pseudomonadati</taxon>
        <taxon>Pseudomonadota</taxon>
        <taxon>Gammaproteobacteria</taxon>
        <taxon>Enterobacterales</taxon>
        <taxon>Enterobacteriaceae</taxon>
        <taxon>Escherichia</taxon>
    </lineage>
</organism>
<dbReference type="EMBL" id="CP000802">
    <property type="protein sequence ID" value="ABV06500.1"/>
    <property type="molecule type" value="Genomic_DNA"/>
</dbReference>
<dbReference type="RefSeq" id="WP_000678989.1">
    <property type="nucleotide sequence ID" value="NC_009800.1"/>
</dbReference>
<dbReference type="SMR" id="A8A1U6"/>
<dbReference type="KEGG" id="ecx:EcHS_A2216"/>
<dbReference type="HOGENOM" id="CLU_018816_2_0_6"/>
<dbReference type="GO" id="GO:1990281">
    <property type="term" value="C:efflux pump complex"/>
    <property type="evidence" value="ECO:0007669"/>
    <property type="project" value="TreeGrafter"/>
</dbReference>
<dbReference type="GO" id="GO:0005886">
    <property type="term" value="C:plasma membrane"/>
    <property type="evidence" value="ECO:0007669"/>
    <property type="project" value="UniProtKB-SubCell"/>
</dbReference>
<dbReference type="GO" id="GO:0015562">
    <property type="term" value="F:efflux transmembrane transporter activity"/>
    <property type="evidence" value="ECO:0007669"/>
    <property type="project" value="TreeGrafter"/>
</dbReference>
<dbReference type="FunFam" id="2.40.420.20:FF:000001">
    <property type="entry name" value="Efflux RND transporter periplasmic adaptor subunit"/>
    <property type="match status" value="1"/>
</dbReference>
<dbReference type="FunFam" id="1.10.287.470:FF:000005">
    <property type="entry name" value="Multidrug resistance protein MdtA"/>
    <property type="match status" value="1"/>
</dbReference>
<dbReference type="FunFam" id="2.40.30.170:FF:000006">
    <property type="entry name" value="Multidrug resistance protein MdtA"/>
    <property type="match status" value="1"/>
</dbReference>
<dbReference type="Gene3D" id="2.40.30.170">
    <property type="match status" value="1"/>
</dbReference>
<dbReference type="Gene3D" id="2.40.420.20">
    <property type="match status" value="1"/>
</dbReference>
<dbReference type="Gene3D" id="2.40.50.100">
    <property type="match status" value="1"/>
</dbReference>
<dbReference type="Gene3D" id="1.10.287.470">
    <property type="entry name" value="Helix hairpin bin"/>
    <property type="match status" value="1"/>
</dbReference>
<dbReference type="HAMAP" id="MF_01422">
    <property type="entry name" value="MdtA"/>
    <property type="match status" value="1"/>
</dbReference>
<dbReference type="InterPro" id="IPR032317">
    <property type="entry name" value="CusB_D23"/>
</dbReference>
<dbReference type="InterPro" id="IPR022824">
    <property type="entry name" value="Multidrug-R_MdtA"/>
</dbReference>
<dbReference type="InterPro" id="IPR006143">
    <property type="entry name" value="RND_pump_MFP"/>
</dbReference>
<dbReference type="NCBIfam" id="NF008589">
    <property type="entry name" value="PRK11556.1"/>
    <property type="match status" value="1"/>
</dbReference>
<dbReference type="NCBIfam" id="TIGR01730">
    <property type="entry name" value="RND_mfp"/>
    <property type="match status" value="1"/>
</dbReference>
<dbReference type="PANTHER" id="PTHR30469">
    <property type="entry name" value="MULTIDRUG RESISTANCE PROTEIN MDTA"/>
    <property type="match status" value="1"/>
</dbReference>
<dbReference type="PANTHER" id="PTHR30469:SF12">
    <property type="entry name" value="MULTIDRUG RESISTANCE PROTEIN MDTA"/>
    <property type="match status" value="1"/>
</dbReference>
<dbReference type="Pfam" id="PF16576">
    <property type="entry name" value="HlyD_D23"/>
    <property type="match status" value="1"/>
</dbReference>
<dbReference type="SUPFAM" id="SSF111369">
    <property type="entry name" value="HlyD-like secretion proteins"/>
    <property type="match status" value="1"/>
</dbReference>
<keyword id="KW-0997">Cell inner membrane</keyword>
<keyword id="KW-1003">Cell membrane</keyword>
<keyword id="KW-0472">Membrane</keyword>
<keyword id="KW-0732">Signal</keyword>
<keyword id="KW-0813">Transport</keyword>
<reference key="1">
    <citation type="journal article" date="2008" name="J. Bacteriol.">
        <title>The pangenome structure of Escherichia coli: comparative genomic analysis of E. coli commensal and pathogenic isolates.</title>
        <authorList>
            <person name="Rasko D.A."/>
            <person name="Rosovitz M.J."/>
            <person name="Myers G.S.A."/>
            <person name="Mongodin E.F."/>
            <person name="Fricke W.F."/>
            <person name="Gajer P."/>
            <person name="Crabtree J."/>
            <person name="Sebaihia M."/>
            <person name="Thomson N.R."/>
            <person name="Chaudhuri R."/>
            <person name="Henderson I.R."/>
            <person name="Sperandio V."/>
            <person name="Ravel J."/>
        </authorList>
    </citation>
    <scope>NUCLEOTIDE SEQUENCE [LARGE SCALE GENOMIC DNA]</scope>
    <source>
        <strain>HS</strain>
    </source>
</reference>
<proteinExistence type="inferred from homology"/>
<accession>A8A1U6</accession>
<protein>
    <recommendedName>
        <fullName evidence="1">Multidrug resistance protein MdtA</fullName>
    </recommendedName>
    <alternativeName>
        <fullName evidence="1">Multidrug transporter MdtA</fullName>
    </alternativeName>
</protein>
<feature type="signal peptide" evidence="1">
    <location>
        <begin position="1"/>
        <end position="21"/>
    </location>
</feature>
<feature type="chain" id="PRO_1000068499" description="Multidrug resistance protein MdtA">
    <location>
        <begin position="22"/>
        <end position="415"/>
    </location>
</feature>
<feature type="region of interest" description="Disordered" evidence="2">
    <location>
        <begin position="32"/>
        <end position="60"/>
    </location>
</feature>
<feature type="region of interest" description="Disordered" evidence="2">
    <location>
        <begin position="392"/>
        <end position="415"/>
    </location>
</feature>
<feature type="compositionally biased region" description="Basic and acidic residues" evidence="2">
    <location>
        <begin position="399"/>
        <end position="415"/>
    </location>
</feature>
<evidence type="ECO:0000255" key="1">
    <source>
        <dbReference type="HAMAP-Rule" id="MF_01422"/>
    </source>
</evidence>
<evidence type="ECO:0000256" key="2">
    <source>
        <dbReference type="SAM" id="MobiDB-lite"/>
    </source>
</evidence>
<comment type="function">
    <text evidence="1">The MdtABC tripartite complex confers resistance against novobiocin and deoxycholate.</text>
</comment>
<comment type="subunit">
    <text evidence="1">Part of a tripartite efflux system composed of MdtA, MdtB and MdtC.</text>
</comment>
<comment type="subcellular location">
    <subcellularLocation>
        <location evidence="1">Cell inner membrane</location>
        <topology evidence="1">Peripheral membrane protein</topology>
    </subcellularLocation>
</comment>
<comment type="induction">
    <text evidence="1">The mdtABC operon is transcriptionally activated by BaeR.</text>
</comment>
<comment type="similarity">
    <text evidence="1">Belongs to the membrane fusion protein (MFP) (TC 8.A.1) family.</text>
</comment>